<name>HXA1_RAT</name>
<accession>O08656</accession>
<gene>
    <name type="primary">Hoxa1</name>
</gene>
<comment type="function">
    <text evidence="1 2 3">Sequence-specific transcription factor (By similarity). Regulates multiple developmental processes including brainstem, inner and outer ear, abducens nerve and cardiovascular development and morphogenesis as well as cognition and behavior (By similarity). Also part of a developmental regulatory system that provides cells with specific positional identities on the anterior-posterior axis. Acts on the anterior body structures. Seems to act in the maintenance and/or generation of hindbrain segments (By similarity). Activates transcription in the presence of PBX1A and PKNOX1 (By similarity).</text>
</comment>
<comment type="subunit">
    <text evidence="2">Interacts with OGT (via TPR repeats domain); the interaction takes place mainly in the nucleus (By similarity). Forms a DNA-binding heterodimer with transcription factor PBX1 (By similarity).</text>
</comment>
<comment type="subcellular location">
    <subcellularLocation>
        <location evidence="4">Nucleus</location>
    </subcellularLocation>
</comment>
<comment type="PTM">
    <text evidence="1">Glycosylated by OGT.</text>
</comment>
<comment type="similarity">
    <text evidence="6">Belongs to the Antp homeobox family. Labial subfamily.</text>
</comment>
<evidence type="ECO:0000250" key="1">
    <source>
        <dbReference type="UniProtKB" id="P09022"/>
    </source>
</evidence>
<evidence type="ECO:0000250" key="2">
    <source>
        <dbReference type="UniProtKB" id="P49639"/>
    </source>
</evidence>
<evidence type="ECO:0000250" key="3">
    <source>
        <dbReference type="UniProtKB" id="Q90423"/>
    </source>
</evidence>
<evidence type="ECO:0000255" key="4">
    <source>
        <dbReference type="PROSITE-ProRule" id="PRU00108"/>
    </source>
</evidence>
<evidence type="ECO:0000256" key="5">
    <source>
        <dbReference type="SAM" id="MobiDB-lite"/>
    </source>
</evidence>
<evidence type="ECO:0000305" key="6"/>
<reference key="1">
    <citation type="submission" date="1997-03" db="EMBL/GenBank/DDBJ databases">
        <authorList>
            <person name="Cook T."/>
            <person name="Urrutia R."/>
        </authorList>
    </citation>
    <scope>NUCLEOTIDE SEQUENCE [MRNA]</scope>
    <source>
        <tissue>Pancreas</tissue>
    </source>
</reference>
<proteinExistence type="evidence at transcript level"/>
<protein>
    <recommendedName>
        <fullName>Homeobox protein Hox-A1</fullName>
    </recommendedName>
</protein>
<organism>
    <name type="scientific">Rattus norvegicus</name>
    <name type="common">Rat</name>
    <dbReference type="NCBI Taxonomy" id="10116"/>
    <lineage>
        <taxon>Eukaryota</taxon>
        <taxon>Metazoa</taxon>
        <taxon>Chordata</taxon>
        <taxon>Craniata</taxon>
        <taxon>Vertebrata</taxon>
        <taxon>Euteleostomi</taxon>
        <taxon>Mammalia</taxon>
        <taxon>Eutheria</taxon>
        <taxon>Euarchontoglires</taxon>
        <taxon>Glires</taxon>
        <taxon>Rodentia</taxon>
        <taxon>Myomorpha</taxon>
        <taxon>Muroidea</taxon>
        <taxon>Muridae</taxon>
        <taxon>Murinae</taxon>
        <taxon>Rattus</taxon>
    </lineage>
</organism>
<dbReference type="EMBL" id="U93092">
    <property type="protein sequence ID" value="AAB51399.1"/>
    <property type="molecule type" value="mRNA"/>
</dbReference>
<dbReference type="SMR" id="O08656"/>
<dbReference type="FunCoup" id="O08656">
    <property type="interactions" value="232"/>
</dbReference>
<dbReference type="STRING" id="10116.ENSRNOP00000007807"/>
<dbReference type="GlyCosmos" id="O08656">
    <property type="glycosylation" value="1 site, No reported glycans"/>
</dbReference>
<dbReference type="GlyGen" id="O08656">
    <property type="glycosylation" value="1 site"/>
</dbReference>
<dbReference type="PhosphoSitePlus" id="O08656"/>
<dbReference type="PaxDb" id="10116-ENSRNOP00000007807"/>
<dbReference type="UCSC" id="RGD:2812">
    <property type="organism name" value="rat"/>
</dbReference>
<dbReference type="AGR" id="RGD:11414885"/>
<dbReference type="RGD" id="11414885">
    <property type="gene designation" value="Hoxa1"/>
</dbReference>
<dbReference type="eggNOG" id="KOG0489">
    <property type="taxonomic scope" value="Eukaryota"/>
</dbReference>
<dbReference type="InParanoid" id="O08656"/>
<dbReference type="PhylomeDB" id="O08656"/>
<dbReference type="PRO" id="PR:O08656"/>
<dbReference type="Proteomes" id="UP000002494">
    <property type="component" value="Unplaced"/>
</dbReference>
<dbReference type="GO" id="GO:0005634">
    <property type="term" value="C:nucleus"/>
    <property type="evidence" value="ECO:0000318"/>
    <property type="project" value="GO_Central"/>
</dbReference>
<dbReference type="GO" id="GO:0001228">
    <property type="term" value="F:DNA-binding transcription activator activity, RNA polymerase II-specific"/>
    <property type="evidence" value="ECO:0000266"/>
    <property type="project" value="RGD"/>
</dbReference>
<dbReference type="GO" id="GO:0000981">
    <property type="term" value="F:DNA-binding transcription factor activity, RNA polymerase II-specific"/>
    <property type="evidence" value="ECO:0000318"/>
    <property type="project" value="GO_Central"/>
</dbReference>
<dbReference type="GO" id="GO:0042802">
    <property type="term" value="F:identical protein binding"/>
    <property type="evidence" value="ECO:0000266"/>
    <property type="project" value="RGD"/>
</dbReference>
<dbReference type="GO" id="GO:0000978">
    <property type="term" value="F:RNA polymerase II cis-regulatory region sequence-specific DNA binding"/>
    <property type="evidence" value="ECO:0000318"/>
    <property type="project" value="GO_Central"/>
</dbReference>
<dbReference type="GO" id="GO:0043565">
    <property type="term" value="F:sequence-specific DNA binding"/>
    <property type="evidence" value="ECO:0000266"/>
    <property type="project" value="RGD"/>
</dbReference>
<dbReference type="GO" id="GO:1990837">
    <property type="term" value="F:sequence-specific double-stranded DNA binding"/>
    <property type="evidence" value="ECO:0000266"/>
    <property type="project" value="RGD"/>
</dbReference>
<dbReference type="GO" id="GO:0021599">
    <property type="term" value="P:abducens nerve formation"/>
    <property type="evidence" value="ECO:0000266"/>
    <property type="project" value="RGD"/>
</dbReference>
<dbReference type="GO" id="GO:0048646">
    <property type="term" value="P:anatomical structure formation involved in morphogenesis"/>
    <property type="evidence" value="ECO:0000266"/>
    <property type="project" value="RGD"/>
</dbReference>
<dbReference type="GO" id="GO:0009653">
    <property type="term" value="P:anatomical structure morphogenesis"/>
    <property type="evidence" value="ECO:0000266"/>
    <property type="project" value="RGD"/>
</dbReference>
<dbReference type="GO" id="GO:0009952">
    <property type="term" value="P:anterior/posterior pattern specification"/>
    <property type="evidence" value="ECO:0000266"/>
    <property type="project" value="RGD"/>
</dbReference>
<dbReference type="GO" id="GO:0060840">
    <property type="term" value="P:artery development"/>
    <property type="evidence" value="ECO:0000266"/>
    <property type="project" value="RGD"/>
</dbReference>
<dbReference type="GO" id="GO:0048844">
    <property type="term" value="P:artery morphogenesis"/>
    <property type="evidence" value="ECO:0000266"/>
    <property type="project" value="RGD"/>
</dbReference>
<dbReference type="GO" id="GO:0071361">
    <property type="term" value="P:cellular response to ethanol"/>
    <property type="evidence" value="ECO:0000266"/>
    <property type="project" value="RGD"/>
</dbReference>
<dbReference type="GO" id="GO:0071300">
    <property type="term" value="P:cellular response to retinoic acid"/>
    <property type="evidence" value="ECO:0000266"/>
    <property type="project" value="RGD"/>
</dbReference>
<dbReference type="GO" id="GO:0021953">
    <property type="term" value="P:central nervous system neuron differentiation"/>
    <property type="evidence" value="ECO:0000266"/>
    <property type="project" value="RGD"/>
</dbReference>
<dbReference type="GO" id="GO:0090102">
    <property type="term" value="P:cochlea development"/>
    <property type="evidence" value="ECO:0000266"/>
    <property type="project" value="RGD"/>
</dbReference>
<dbReference type="GO" id="GO:0090103">
    <property type="term" value="P:cochlea morphogenesis"/>
    <property type="evidence" value="ECO:0000266"/>
    <property type="project" value="RGD"/>
</dbReference>
<dbReference type="GO" id="GO:0050890">
    <property type="term" value="P:cognition"/>
    <property type="evidence" value="ECO:0000266"/>
    <property type="project" value="RGD"/>
</dbReference>
<dbReference type="GO" id="GO:0048702">
    <property type="term" value="P:embryonic neurocranium morphogenesis"/>
    <property type="evidence" value="ECO:0000266"/>
    <property type="project" value="RGD"/>
</dbReference>
<dbReference type="GO" id="GO:0021612">
    <property type="term" value="P:facial nerve structural organization"/>
    <property type="evidence" value="ECO:0000266"/>
    <property type="project" value="RGD"/>
</dbReference>
<dbReference type="GO" id="GO:0021754">
    <property type="term" value="P:facial nucleus development"/>
    <property type="evidence" value="ECO:0000266"/>
    <property type="project" value="RGD"/>
</dbReference>
<dbReference type="GO" id="GO:0030902">
    <property type="term" value="P:hindbrain development"/>
    <property type="evidence" value="ECO:0000266"/>
    <property type="project" value="RGD"/>
</dbReference>
<dbReference type="GO" id="GO:0048839">
    <property type="term" value="P:inner ear development"/>
    <property type="evidence" value="ECO:0000266"/>
    <property type="project" value="RGD"/>
</dbReference>
<dbReference type="GO" id="GO:0042472">
    <property type="term" value="P:inner ear morphogenesis"/>
    <property type="evidence" value="ECO:0000266"/>
    <property type="project" value="RGD"/>
</dbReference>
<dbReference type="GO" id="GO:0008045">
    <property type="term" value="P:motor neuron axon guidance"/>
    <property type="evidence" value="ECO:0000266"/>
    <property type="project" value="RGD"/>
</dbReference>
<dbReference type="GO" id="GO:0007399">
    <property type="term" value="P:nervous system development"/>
    <property type="evidence" value="ECO:0000266"/>
    <property type="project" value="RGD"/>
</dbReference>
<dbReference type="GO" id="GO:0050905">
    <property type="term" value="P:neuromuscular process"/>
    <property type="evidence" value="ECO:0000266"/>
    <property type="project" value="RGD"/>
</dbReference>
<dbReference type="GO" id="GO:0007634">
    <property type="term" value="P:optokinetic behavior"/>
    <property type="evidence" value="ECO:0000266"/>
    <property type="project" value="RGD"/>
</dbReference>
<dbReference type="GO" id="GO:0042473">
    <property type="term" value="P:outer ear morphogenesis"/>
    <property type="evidence" value="ECO:0000266"/>
    <property type="project" value="RGD"/>
</dbReference>
<dbReference type="GO" id="GO:0045944">
    <property type="term" value="P:positive regulation of transcription by RNA polymerase II"/>
    <property type="evidence" value="ECO:0000266"/>
    <property type="project" value="RGD"/>
</dbReference>
<dbReference type="GO" id="GO:0050795">
    <property type="term" value="P:regulation of behavior"/>
    <property type="evidence" value="ECO:0000266"/>
    <property type="project" value="RGD"/>
</dbReference>
<dbReference type="GO" id="GO:0006357">
    <property type="term" value="P:regulation of transcription by RNA polymerase II"/>
    <property type="evidence" value="ECO:0000266"/>
    <property type="project" value="RGD"/>
</dbReference>
<dbReference type="GO" id="GO:0021569">
    <property type="term" value="P:rhombomere 3 development"/>
    <property type="evidence" value="ECO:0000266"/>
    <property type="project" value="RGD"/>
</dbReference>
<dbReference type="GO" id="GO:0021570">
    <property type="term" value="P:rhombomere 4 development"/>
    <property type="evidence" value="ECO:0000266"/>
    <property type="project" value="RGD"/>
</dbReference>
<dbReference type="GO" id="GO:0021571">
    <property type="term" value="P:rhombomere 5 development"/>
    <property type="evidence" value="ECO:0000266"/>
    <property type="project" value="RGD"/>
</dbReference>
<dbReference type="GO" id="GO:0060876">
    <property type="term" value="P:semicircular canal formation"/>
    <property type="evidence" value="ECO:0000266"/>
    <property type="project" value="RGD"/>
</dbReference>
<dbReference type="GO" id="GO:0007605">
    <property type="term" value="P:sensory perception of sound"/>
    <property type="evidence" value="ECO:0000266"/>
    <property type="project" value="RGD"/>
</dbReference>
<dbReference type="CDD" id="cd00086">
    <property type="entry name" value="homeodomain"/>
    <property type="match status" value="1"/>
</dbReference>
<dbReference type="FunFam" id="1.10.10.60:FF:000113">
    <property type="entry name" value="homeobox protein Hox-B1"/>
    <property type="match status" value="1"/>
</dbReference>
<dbReference type="Gene3D" id="1.10.10.60">
    <property type="entry name" value="Homeodomain-like"/>
    <property type="match status" value="1"/>
</dbReference>
<dbReference type="InterPro" id="IPR001356">
    <property type="entry name" value="HD"/>
</dbReference>
<dbReference type="InterPro" id="IPR017970">
    <property type="entry name" value="Homeobox_CS"/>
</dbReference>
<dbReference type="InterPro" id="IPR009057">
    <property type="entry name" value="Homeodomain-like_sf"/>
</dbReference>
<dbReference type="InterPro" id="IPR046327">
    <property type="entry name" value="HXA1/B1/D1"/>
</dbReference>
<dbReference type="PANTHER" id="PTHR45946:SF3">
    <property type="entry name" value="HOMEOBOX PROTEIN HOX-A1"/>
    <property type="match status" value="1"/>
</dbReference>
<dbReference type="PANTHER" id="PTHR45946">
    <property type="entry name" value="HOMEOBOX PROTEIN ROUGH-RELATED"/>
    <property type="match status" value="1"/>
</dbReference>
<dbReference type="Pfam" id="PF00046">
    <property type="entry name" value="Homeodomain"/>
    <property type="match status" value="1"/>
</dbReference>
<dbReference type="SMART" id="SM00389">
    <property type="entry name" value="HOX"/>
    <property type="match status" value="1"/>
</dbReference>
<dbReference type="SUPFAM" id="SSF46689">
    <property type="entry name" value="Homeodomain-like"/>
    <property type="match status" value="1"/>
</dbReference>
<dbReference type="PROSITE" id="PS00027">
    <property type="entry name" value="HOMEOBOX_1"/>
    <property type="match status" value="1"/>
</dbReference>
<dbReference type="PROSITE" id="PS50071">
    <property type="entry name" value="HOMEOBOX_2"/>
    <property type="match status" value="1"/>
</dbReference>
<feature type="chain" id="PRO_0000200032" description="Homeobox protein Hox-A1">
    <location>
        <begin position="1"/>
        <end position="333"/>
    </location>
</feature>
<feature type="DNA-binding region" description="Homeobox" evidence="4">
    <location>
        <begin position="227"/>
        <end position="286"/>
    </location>
</feature>
<feature type="region of interest" description="Disordered" evidence="5">
    <location>
        <begin position="61"/>
        <end position="82"/>
    </location>
</feature>
<feature type="region of interest" description="Interaction with OGT" evidence="1">
    <location>
        <begin position="74"/>
        <end position="202"/>
    </location>
</feature>
<feature type="region of interest" description="Disordered" evidence="5">
    <location>
        <begin position="279"/>
        <end position="333"/>
    </location>
</feature>
<feature type="short sequence motif" description="Antp-type hexapeptide">
    <location>
        <begin position="203"/>
        <end position="208"/>
    </location>
</feature>
<feature type="compositionally biased region" description="Basic residues" evidence="5">
    <location>
        <begin position="64"/>
        <end position="74"/>
    </location>
</feature>
<feature type="compositionally biased region" description="Basic and acidic residues" evidence="5">
    <location>
        <begin position="301"/>
        <end position="310"/>
    </location>
</feature>
<feature type="compositionally biased region" description="Low complexity" evidence="5">
    <location>
        <begin position="311"/>
        <end position="333"/>
    </location>
</feature>
<feature type="glycosylation site" description="O-linked (GlcNAc) threonine" evidence="1">
    <location>
        <position position="152"/>
    </location>
</feature>
<keyword id="KW-0217">Developmental protein</keyword>
<keyword id="KW-0238">DNA-binding</keyword>
<keyword id="KW-0325">Glycoprotein</keyword>
<keyword id="KW-0371">Homeobox</keyword>
<keyword id="KW-0539">Nucleus</keyword>
<keyword id="KW-1185">Reference proteome</keyword>
<keyword id="KW-0804">Transcription</keyword>
<keyword id="KW-0805">Transcription regulation</keyword>
<sequence>MDNARLNSFLEYPILGSGDSGTCSARVYSSDHGITTFQSCAVSANSCGGDDRFLGGRGVQITSPHHHHHHHHHPQPATYQTSGNLGVSYSHSSCGPSYGAQNFSAPYGPYGLNQEADVSGGYPPCAPAVYSGNLSSPMVQHHHHHQGYAGGTVGSPQYIHHSYGQEHQSLALATYNNSLSPLHASHQEACRSPASETSSPAQTFDWMKVKRNPPKTGKVGEYGYVGQPNAVRTNFTTKQLTELEKEFHFNKYLTRARSEIAASLQLNETQVKIWFQNRRMKQKKREKEGLLPMSPATPPGSDEKTEESSEKSSSSPSAPSPASSTSDTLTTSH</sequence>